<dbReference type="EC" id="6.3.4.20" evidence="1"/>
<dbReference type="EMBL" id="CP000438">
    <property type="protein sequence ID" value="ABJ10137.1"/>
    <property type="molecule type" value="Genomic_DNA"/>
</dbReference>
<dbReference type="RefSeq" id="WP_003111415.1">
    <property type="nucleotide sequence ID" value="NZ_CP034244.1"/>
</dbReference>
<dbReference type="SMR" id="Q02ID8"/>
<dbReference type="KEGG" id="pau:PA14_51670"/>
<dbReference type="PseudoCAP" id="PA14_51670"/>
<dbReference type="HOGENOM" id="CLU_081854_1_1_6"/>
<dbReference type="BioCyc" id="PAER208963:G1G74-4346-MONOMER"/>
<dbReference type="UniPathway" id="UPA00391"/>
<dbReference type="Proteomes" id="UP000000653">
    <property type="component" value="Chromosome"/>
</dbReference>
<dbReference type="GO" id="GO:0005524">
    <property type="term" value="F:ATP binding"/>
    <property type="evidence" value="ECO:0007669"/>
    <property type="project" value="UniProtKB-UniRule"/>
</dbReference>
<dbReference type="GO" id="GO:0016879">
    <property type="term" value="F:ligase activity, forming carbon-nitrogen bonds"/>
    <property type="evidence" value="ECO:0007669"/>
    <property type="project" value="UniProtKB-UniRule"/>
</dbReference>
<dbReference type="GO" id="GO:0008270">
    <property type="term" value="F:zinc ion binding"/>
    <property type="evidence" value="ECO:0007669"/>
    <property type="project" value="UniProtKB-UniRule"/>
</dbReference>
<dbReference type="GO" id="GO:0008616">
    <property type="term" value="P:queuosine biosynthetic process"/>
    <property type="evidence" value="ECO:0007669"/>
    <property type="project" value="UniProtKB-UniRule"/>
</dbReference>
<dbReference type="CDD" id="cd01995">
    <property type="entry name" value="QueC-like"/>
    <property type="match status" value="1"/>
</dbReference>
<dbReference type="FunFam" id="3.40.50.620:FF:000131">
    <property type="entry name" value="7-cyano-7-deazaguanine synthase"/>
    <property type="match status" value="1"/>
</dbReference>
<dbReference type="Gene3D" id="3.40.50.620">
    <property type="entry name" value="HUPs"/>
    <property type="match status" value="1"/>
</dbReference>
<dbReference type="HAMAP" id="MF_01633">
    <property type="entry name" value="QueC"/>
    <property type="match status" value="1"/>
</dbReference>
<dbReference type="InterPro" id="IPR018317">
    <property type="entry name" value="QueC"/>
</dbReference>
<dbReference type="InterPro" id="IPR014729">
    <property type="entry name" value="Rossmann-like_a/b/a_fold"/>
</dbReference>
<dbReference type="NCBIfam" id="TIGR00364">
    <property type="entry name" value="7-cyano-7-deazaguanine synthase QueC"/>
    <property type="match status" value="1"/>
</dbReference>
<dbReference type="PANTHER" id="PTHR42914">
    <property type="entry name" value="7-CYANO-7-DEAZAGUANINE SYNTHASE"/>
    <property type="match status" value="1"/>
</dbReference>
<dbReference type="PANTHER" id="PTHR42914:SF1">
    <property type="entry name" value="7-CYANO-7-DEAZAGUANINE SYNTHASE"/>
    <property type="match status" value="1"/>
</dbReference>
<dbReference type="Pfam" id="PF06508">
    <property type="entry name" value="QueC"/>
    <property type="match status" value="1"/>
</dbReference>
<dbReference type="PIRSF" id="PIRSF006293">
    <property type="entry name" value="ExsB"/>
    <property type="match status" value="1"/>
</dbReference>
<dbReference type="SUPFAM" id="SSF52402">
    <property type="entry name" value="Adenine nucleotide alpha hydrolases-like"/>
    <property type="match status" value="1"/>
</dbReference>
<comment type="function">
    <text evidence="1">Catalyzes the ATP-dependent conversion of 7-carboxy-7-deazaguanine (CDG) to 7-cyano-7-deazaguanine (preQ(0)).</text>
</comment>
<comment type="catalytic activity">
    <reaction evidence="1">
        <text>7-carboxy-7-deazaguanine + NH4(+) + ATP = 7-cyano-7-deazaguanine + ADP + phosphate + H2O + H(+)</text>
        <dbReference type="Rhea" id="RHEA:27982"/>
        <dbReference type="ChEBI" id="CHEBI:15377"/>
        <dbReference type="ChEBI" id="CHEBI:15378"/>
        <dbReference type="ChEBI" id="CHEBI:28938"/>
        <dbReference type="ChEBI" id="CHEBI:30616"/>
        <dbReference type="ChEBI" id="CHEBI:43474"/>
        <dbReference type="ChEBI" id="CHEBI:45075"/>
        <dbReference type="ChEBI" id="CHEBI:61036"/>
        <dbReference type="ChEBI" id="CHEBI:456216"/>
        <dbReference type="EC" id="6.3.4.20"/>
    </reaction>
</comment>
<comment type="cofactor">
    <cofactor evidence="1">
        <name>Zn(2+)</name>
        <dbReference type="ChEBI" id="CHEBI:29105"/>
    </cofactor>
    <text evidence="1">Binds 1 zinc ion per subunit.</text>
</comment>
<comment type="pathway">
    <text evidence="1">Purine metabolism; 7-cyano-7-deazaguanine biosynthesis.</text>
</comment>
<comment type="similarity">
    <text evidence="1">Belongs to the QueC family.</text>
</comment>
<protein>
    <recommendedName>
        <fullName evidence="1">7-cyano-7-deazaguanine synthase</fullName>
        <ecNumber evidence="1">6.3.4.20</ecNumber>
    </recommendedName>
    <alternativeName>
        <fullName evidence="1">7-cyano-7-carbaguanine synthase</fullName>
    </alternativeName>
    <alternativeName>
        <fullName evidence="1">PreQ(0) synthase</fullName>
    </alternativeName>
    <alternativeName>
        <fullName evidence="1">Queuosine biosynthesis protein QueC</fullName>
    </alternativeName>
</protein>
<sequence>MNQKKAVILLSGGLDSATVVAMAKADGYACYTMSFDYGQRHRAELQAAERVARQLGVIEHKVIGLDLNGMGGSALTDESIAVPESPSEGIPVTYVPARNTVFLSLALGWAEVLDARDIFIGVNAVDYSGYPDCRPEFVEAFERMANLATKAGVEGNGFRIQAPLQYLSKAQIIQAGVARGVDYGLTVSCYQADEQGRACGKCDSCRLRADGFAAAGISDPTPYF</sequence>
<proteinExistence type="inferred from homology"/>
<organism>
    <name type="scientific">Pseudomonas aeruginosa (strain UCBPP-PA14)</name>
    <dbReference type="NCBI Taxonomy" id="208963"/>
    <lineage>
        <taxon>Bacteria</taxon>
        <taxon>Pseudomonadati</taxon>
        <taxon>Pseudomonadota</taxon>
        <taxon>Gammaproteobacteria</taxon>
        <taxon>Pseudomonadales</taxon>
        <taxon>Pseudomonadaceae</taxon>
        <taxon>Pseudomonas</taxon>
    </lineage>
</organism>
<feature type="chain" id="PRO_0000336933" description="7-cyano-7-deazaguanine synthase">
    <location>
        <begin position="1"/>
        <end position="224"/>
    </location>
</feature>
<feature type="binding site" evidence="1">
    <location>
        <begin position="10"/>
        <end position="20"/>
    </location>
    <ligand>
        <name>ATP</name>
        <dbReference type="ChEBI" id="CHEBI:30616"/>
    </ligand>
</feature>
<feature type="binding site" evidence="1">
    <location>
        <position position="189"/>
    </location>
    <ligand>
        <name>Zn(2+)</name>
        <dbReference type="ChEBI" id="CHEBI:29105"/>
    </ligand>
</feature>
<feature type="binding site" evidence="1">
    <location>
        <position position="199"/>
    </location>
    <ligand>
        <name>Zn(2+)</name>
        <dbReference type="ChEBI" id="CHEBI:29105"/>
    </ligand>
</feature>
<feature type="binding site" evidence="1">
    <location>
        <position position="202"/>
    </location>
    <ligand>
        <name>Zn(2+)</name>
        <dbReference type="ChEBI" id="CHEBI:29105"/>
    </ligand>
</feature>
<feature type="binding site" evidence="1">
    <location>
        <position position="205"/>
    </location>
    <ligand>
        <name>Zn(2+)</name>
        <dbReference type="ChEBI" id="CHEBI:29105"/>
    </ligand>
</feature>
<accession>Q02ID8</accession>
<gene>
    <name evidence="1" type="primary">queC</name>
    <name type="ordered locus">PA14_51670</name>
</gene>
<evidence type="ECO:0000255" key="1">
    <source>
        <dbReference type="HAMAP-Rule" id="MF_01633"/>
    </source>
</evidence>
<reference key="1">
    <citation type="journal article" date="2006" name="Genome Biol.">
        <title>Genomic analysis reveals that Pseudomonas aeruginosa virulence is combinatorial.</title>
        <authorList>
            <person name="Lee D.G."/>
            <person name="Urbach J.M."/>
            <person name="Wu G."/>
            <person name="Liberati N.T."/>
            <person name="Feinbaum R.L."/>
            <person name="Miyata S."/>
            <person name="Diggins L.T."/>
            <person name="He J."/>
            <person name="Saucier M."/>
            <person name="Deziel E."/>
            <person name="Friedman L."/>
            <person name="Li L."/>
            <person name="Grills G."/>
            <person name="Montgomery K."/>
            <person name="Kucherlapati R."/>
            <person name="Rahme L.G."/>
            <person name="Ausubel F.M."/>
        </authorList>
    </citation>
    <scope>NUCLEOTIDE SEQUENCE [LARGE SCALE GENOMIC DNA]</scope>
    <source>
        <strain>UCBPP-PA14</strain>
    </source>
</reference>
<name>QUEC_PSEAB</name>
<keyword id="KW-0067">ATP-binding</keyword>
<keyword id="KW-0436">Ligase</keyword>
<keyword id="KW-0479">Metal-binding</keyword>
<keyword id="KW-0547">Nucleotide-binding</keyword>
<keyword id="KW-0671">Queuosine biosynthesis</keyword>
<keyword id="KW-0862">Zinc</keyword>